<comment type="function">
    <text evidence="1">Catalyzes a trans-dehydration via an enolate intermediate.</text>
</comment>
<comment type="catalytic activity">
    <reaction evidence="1">
        <text>3-dehydroquinate = 3-dehydroshikimate + H2O</text>
        <dbReference type="Rhea" id="RHEA:21096"/>
        <dbReference type="ChEBI" id="CHEBI:15377"/>
        <dbReference type="ChEBI" id="CHEBI:16630"/>
        <dbReference type="ChEBI" id="CHEBI:32364"/>
        <dbReference type="EC" id="4.2.1.10"/>
    </reaction>
</comment>
<comment type="pathway">
    <text evidence="1">Metabolic intermediate biosynthesis; chorismate biosynthesis; chorismate from D-erythrose 4-phosphate and phosphoenolpyruvate: step 3/7.</text>
</comment>
<comment type="subunit">
    <text evidence="1">Homododecamer.</text>
</comment>
<comment type="similarity">
    <text evidence="1">Belongs to the type-II 3-dehydroquinase family.</text>
</comment>
<reference key="1">
    <citation type="submission" date="2008-01" db="EMBL/GenBank/DDBJ databases">
        <title>Complete sequence of Shewanella halifaxensis HAW-EB4.</title>
        <authorList>
            <consortium name="US DOE Joint Genome Institute"/>
            <person name="Copeland A."/>
            <person name="Lucas S."/>
            <person name="Lapidus A."/>
            <person name="Glavina del Rio T."/>
            <person name="Dalin E."/>
            <person name="Tice H."/>
            <person name="Bruce D."/>
            <person name="Goodwin L."/>
            <person name="Pitluck S."/>
            <person name="Sims D."/>
            <person name="Brettin T."/>
            <person name="Detter J.C."/>
            <person name="Han C."/>
            <person name="Kuske C.R."/>
            <person name="Schmutz J."/>
            <person name="Larimer F."/>
            <person name="Land M."/>
            <person name="Hauser L."/>
            <person name="Kyrpides N."/>
            <person name="Kim E."/>
            <person name="Zhao J.-S."/>
            <person name="Richardson P."/>
        </authorList>
    </citation>
    <scope>NUCLEOTIDE SEQUENCE [LARGE SCALE GENOMIC DNA]</scope>
    <source>
        <strain>HAW-EB4</strain>
    </source>
</reference>
<accession>B0TS36</accession>
<gene>
    <name evidence="1" type="primary">aroQ</name>
    <name type="ordered locus">Shal_0596</name>
</gene>
<sequence length="151" mass="16447">MSSQPKILLVNGPNLNLLGRREPGHYGHHTLEQIVDDLKQSATQAGIQLDHIQSNAEHLLIEAIHNSDADMVIINPAAFTHTSVALRDALLGVAIPFIEVHLSNVHSREPFRHHSYFSDKAIGVICGLGAQGYQFALQAAIARIHAAEKQG</sequence>
<name>AROQ_SHEHH</name>
<keyword id="KW-0028">Amino-acid biosynthesis</keyword>
<keyword id="KW-0057">Aromatic amino acid biosynthesis</keyword>
<keyword id="KW-0456">Lyase</keyword>
<feature type="chain" id="PRO_1000097621" description="3-dehydroquinate dehydratase">
    <location>
        <begin position="1"/>
        <end position="151"/>
    </location>
</feature>
<feature type="active site" description="Proton acceptor" evidence="1">
    <location>
        <position position="26"/>
    </location>
</feature>
<feature type="active site" description="Proton donor" evidence="1">
    <location>
        <position position="101"/>
    </location>
</feature>
<feature type="binding site" evidence="1">
    <location>
        <position position="75"/>
    </location>
    <ligand>
        <name>substrate</name>
    </ligand>
</feature>
<feature type="binding site" evidence="1">
    <location>
        <position position="81"/>
    </location>
    <ligand>
        <name>substrate</name>
    </ligand>
</feature>
<feature type="binding site" evidence="1">
    <location>
        <position position="88"/>
    </location>
    <ligand>
        <name>substrate</name>
    </ligand>
</feature>
<feature type="binding site" evidence="1">
    <location>
        <begin position="102"/>
        <end position="103"/>
    </location>
    <ligand>
        <name>substrate</name>
    </ligand>
</feature>
<feature type="binding site" evidence="1">
    <location>
        <position position="112"/>
    </location>
    <ligand>
        <name>substrate</name>
    </ligand>
</feature>
<feature type="site" description="Transition state stabilizer" evidence="1">
    <location>
        <position position="21"/>
    </location>
</feature>
<evidence type="ECO:0000255" key="1">
    <source>
        <dbReference type="HAMAP-Rule" id="MF_00169"/>
    </source>
</evidence>
<dbReference type="EC" id="4.2.1.10" evidence="1"/>
<dbReference type="EMBL" id="CP000931">
    <property type="protein sequence ID" value="ABZ75171.1"/>
    <property type="molecule type" value="Genomic_DNA"/>
</dbReference>
<dbReference type="RefSeq" id="WP_012275725.1">
    <property type="nucleotide sequence ID" value="NC_010334.1"/>
</dbReference>
<dbReference type="SMR" id="B0TS36"/>
<dbReference type="STRING" id="458817.Shal_0596"/>
<dbReference type="KEGG" id="shl:Shal_0596"/>
<dbReference type="eggNOG" id="COG0757">
    <property type="taxonomic scope" value="Bacteria"/>
</dbReference>
<dbReference type="HOGENOM" id="CLU_090968_1_0_6"/>
<dbReference type="OrthoDB" id="9790793at2"/>
<dbReference type="UniPathway" id="UPA00053">
    <property type="reaction ID" value="UER00086"/>
</dbReference>
<dbReference type="Proteomes" id="UP000001317">
    <property type="component" value="Chromosome"/>
</dbReference>
<dbReference type="GO" id="GO:0003855">
    <property type="term" value="F:3-dehydroquinate dehydratase activity"/>
    <property type="evidence" value="ECO:0007669"/>
    <property type="project" value="UniProtKB-UniRule"/>
</dbReference>
<dbReference type="GO" id="GO:0008652">
    <property type="term" value="P:amino acid biosynthetic process"/>
    <property type="evidence" value="ECO:0007669"/>
    <property type="project" value="UniProtKB-KW"/>
</dbReference>
<dbReference type="GO" id="GO:0009073">
    <property type="term" value="P:aromatic amino acid family biosynthetic process"/>
    <property type="evidence" value="ECO:0007669"/>
    <property type="project" value="UniProtKB-KW"/>
</dbReference>
<dbReference type="GO" id="GO:0009423">
    <property type="term" value="P:chorismate biosynthetic process"/>
    <property type="evidence" value="ECO:0007669"/>
    <property type="project" value="UniProtKB-UniRule"/>
</dbReference>
<dbReference type="GO" id="GO:0019631">
    <property type="term" value="P:quinate catabolic process"/>
    <property type="evidence" value="ECO:0007669"/>
    <property type="project" value="TreeGrafter"/>
</dbReference>
<dbReference type="CDD" id="cd00466">
    <property type="entry name" value="DHQase_II"/>
    <property type="match status" value="1"/>
</dbReference>
<dbReference type="Gene3D" id="3.40.50.9100">
    <property type="entry name" value="Dehydroquinase, class II"/>
    <property type="match status" value="1"/>
</dbReference>
<dbReference type="HAMAP" id="MF_00169">
    <property type="entry name" value="AroQ"/>
    <property type="match status" value="1"/>
</dbReference>
<dbReference type="InterPro" id="IPR001874">
    <property type="entry name" value="DHquinase_II"/>
</dbReference>
<dbReference type="InterPro" id="IPR018509">
    <property type="entry name" value="DHquinase_II_CS"/>
</dbReference>
<dbReference type="InterPro" id="IPR036441">
    <property type="entry name" value="DHquinase_II_sf"/>
</dbReference>
<dbReference type="NCBIfam" id="TIGR01088">
    <property type="entry name" value="aroQ"/>
    <property type="match status" value="1"/>
</dbReference>
<dbReference type="NCBIfam" id="NF003804">
    <property type="entry name" value="PRK05395.1-1"/>
    <property type="match status" value="1"/>
</dbReference>
<dbReference type="NCBIfam" id="NF003805">
    <property type="entry name" value="PRK05395.1-2"/>
    <property type="match status" value="1"/>
</dbReference>
<dbReference type="NCBIfam" id="NF003806">
    <property type="entry name" value="PRK05395.1-3"/>
    <property type="match status" value="1"/>
</dbReference>
<dbReference type="NCBIfam" id="NF003807">
    <property type="entry name" value="PRK05395.1-4"/>
    <property type="match status" value="1"/>
</dbReference>
<dbReference type="PANTHER" id="PTHR21272">
    <property type="entry name" value="CATABOLIC 3-DEHYDROQUINASE"/>
    <property type="match status" value="1"/>
</dbReference>
<dbReference type="PANTHER" id="PTHR21272:SF3">
    <property type="entry name" value="CATABOLIC 3-DEHYDROQUINASE"/>
    <property type="match status" value="1"/>
</dbReference>
<dbReference type="Pfam" id="PF01220">
    <property type="entry name" value="DHquinase_II"/>
    <property type="match status" value="1"/>
</dbReference>
<dbReference type="PIRSF" id="PIRSF001399">
    <property type="entry name" value="DHquinase_II"/>
    <property type="match status" value="1"/>
</dbReference>
<dbReference type="SUPFAM" id="SSF52304">
    <property type="entry name" value="Type II 3-dehydroquinate dehydratase"/>
    <property type="match status" value="1"/>
</dbReference>
<dbReference type="PROSITE" id="PS01029">
    <property type="entry name" value="DEHYDROQUINASE_II"/>
    <property type="match status" value="1"/>
</dbReference>
<proteinExistence type="inferred from homology"/>
<organism>
    <name type="scientific">Shewanella halifaxensis (strain HAW-EB4)</name>
    <dbReference type="NCBI Taxonomy" id="458817"/>
    <lineage>
        <taxon>Bacteria</taxon>
        <taxon>Pseudomonadati</taxon>
        <taxon>Pseudomonadota</taxon>
        <taxon>Gammaproteobacteria</taxon>
        <taxon>Alteromonadales</taxon>
        <taxon>Shewanellaceae</taxon>
        <taxon>Shewanella</taxon>
    </lineage>
</organism>
<protein>
    <recommendedName>
        <fullName evidence="1">3-dehydroquinate dehydratase</fullName>
        <shortName evidence="1">3-dehydroquinase</shortName>
        <ecNumber evidence="1">4.2.1.10</ecNumber>
    </recommendedName>
    <alternativeName>
        <fullName evidence="1">Type II DHQase</fullName>
    </alternativeName>
</protein>